<accession>P82631</accession>
<comment type="subcellular location">
    <subcellularLocation>
        <location evidence="1">Secreted</location>
    </subcellularLocation>
</comment>
<comment type="similarity">
    <text evidence="3">Belongs to the DEFL family.</text>
</comment>
<feature type="signal peptide" evidence="2">
    <location>
        <begin position="1"/>
        <end position="27"/>
    </location>
</feature>
<feature type="chain" id="PRO_0000031938" description="Putative defensin-like protein 251">
    <location>
        <begin position="28"/>
        <end position="92"/>
    </location>
</feature>
<feature type="disulfide bond" evidence="1">
    <location>
        <begin position="34"/>
        <end position="90"/>
    </location>
</feature>
<feature type="disulfide bond" evidence="1">
    <location>
        <begin position="45"/>
        <end position="69"/>
    </location>
</feature>
<feature type="disulfide bond" evidence="1">
    <location>
        <begin position="53"/>
        <end position="82"/>
    </location>
</feature>
<feature type="disulfide bond" evidence="1">
    <location>
        <begin position="67"/>
        <end position="84"/>
    </location>
</feature>
<sequence length="92" mass="10876">MRCVTSFVVFCILMFFVLNIFTVEVKAQRLVPLCKTIGYENPGKCPADGNKFCRRKLDDRYVKYKRCDCQDTKGRKQNHHRCICYMKLPCNQ</sequence>
<proteinExistence type="inferred from homology"/>
<keyword id="KW-0929">Antimicrobial</keyword>
<keyword id="KW-1015">Disulfide bond</keyword>
<keyword id="KW-0295">Fungicide</keyword>
<keyword id="KW-0611">Plant defense</keyword>
<keyword id="KW-1185">Reference proteome</keyword>
<keyword id="KW-0964">Secreted</keyword>
<keyword id="KW-0732">Signal</keyword>
<reference evidence="3" key="1">
    <citation type="journal article" date="2000" name="DNA Res.">
        <title>Structural analysis of Arabidopsis thaliana chromosome 3. II. Sequence features of the 4,251,695 bp regions covered by 90 P1, TAC and BAC clones.</title>
        <authorList>
            <person name="Kaneko T."/>
            <person name="Katoh T."/>
            <person name="Sato S."/>
            <person name="Nakamura Y."/>
            <person name="Asamizu E."/>
            <person name="Tabata S."/>
        </authorList>
    </citation>
    <scope>NUCLEOTIDE SEQUENCE [LARGE SCALE GENOMIC DNA]</scope>
    <source>
        <strain>cv. Columbia</strain>
    </source>
</reference>
<reference key="2">
    <citation type="journal article" date="2017" name="Plant J.">
        <title>Araport11: a complete reannotation of the Arabidopsis thaliana reference genome.</title>
        <authorList>
            <person name="Cheng C.Y."/>
            <person name="Krishnakumar V."/>
            <person name="Chan A.P."/>
            <person name="Thibaud-Nissen F."/>
            <person name="Schobel S."/>
            <person name="Town C.D."/>
        </authorList>
    </citation>
    <scope>GENOME REANNOTATION</scope>
    <source>
        <strain>cv. Columbia</strain>
    </source>
</reference>
<reference evidence="3" key="3">
    <citation type="journal article" date="2001" name="Plant Mol. Biol.">
        <title>Two large Arabidopsis thaliana gene families are homologous to the Brassica gene superfamily that encodes pollen coat proteins and the male component of the self-incompatibility response.</title>
        <authorList>
            <person name="Vanoosthuyse V."/>
            <person name="Miege C."/>
            <person name="Dumas C."/>
            <person name="Cock J.M."/>
        </authorList>
    </citation>
    <scope>IDENTIFICATION</scope>
</reference>
<reference key="4">
    <citation type="journal article" date="2005" name="Plant Physiol.">
        <title>Genome organization of more than 300 defensin-like genes in Arabidopsis.</title>
        <authorList>
            <person name="Silverstein K.A.T."/>
            <person name="Graham M.A."/>
            <person name="Paape T.D."/>
            <person name="VandenBosch K.A."/>
        </authorList>
    </citation>
    <scope>GENE FAMILY</scope>
</reference>
<name>DF251_ARATH</name>
<organism evidence="3">
    <name type="scientific">Arabidopsis thaliana</name>
    <name type="common">Mouse-ear cress</name>
    <dbReference type="NCBI Taxonomy" id="3702"/>
    <lineage>
        <taxon>Eukaryota</taxon>
        <taxon>Viridiplantae</taxon>
        <taxon>Streptophyta</taxon>
        <taxon>Embryophyta</taxon>
        <taxon>Tracheophyta</taxon>
        <taxon>Spermatophyta</taxon>
        <taxon>Magnoliopsida</taxon>
        <taxon>eudicotyledons</taxon>
        <taxon>Gunneridae</taxon>
        <taxon>Pentapetalae</taxon>
        <taxon>rosids</taxon>
        <taxon>malvids</taxon>
        <taxon>Brassicales</taxon>
        <taxon>Brassicaceae</taxon>
        <taxon>Camelineae</taxon>
        <taxon>Arabidopsis</taxon>
    </lineage>
</organism>
<dbReference type="EMBL" id="AP000377">
    <property type="status" value="NOT_ANNOTATED_CDS"/>
    <property type="molecule type" value="Genomic_DNA"/>
</dbReference>
<dbReference type="EMBL" id="CP002686">
    <property type="protein sequence ID" value="AEE76806.1"/>
    <property type="molecule type" value="Genomic_DNA"/>
</dbReference>
<dbReference type="RefSeq" id="NP_001030752.1">
    <property type="nucleotide sequence ID" value="NM_001035675.2"/>
</dbReference>
<dbReference type="PaxDb" id="3702-AT3G23727.1"/>
<dbReference type="ProteomicsDB" id="224095"/>
<dbReference type="EnsemblPlants" id="AT3G23727.1">
    <property type="protein sequence ID" value="AT3G23727.1"/>
    <property type="gene ID" value="AT3G23727"/>
</dbReference>
<dbReference type="GeneID" id="3768911"/>
<dbReference type="Gramene" id="AT3G23727.1">
    <property type="protein sequence ID" value="AT3G23727.1"/>
    <property type="gene ID" value="AT3G23727"/>
</dbReference>
<dbReference type="KEGG" id="ath:AT3G23727"/>
<dbReference type="Araport" id="AT3G23727"/>
<dbReference type="TAIR" id="AT3G23727">
    <property type="gene designation" value="SCRL12"/>
</dbReference>
<dbReference type="HOGENOM" id="CLU_174283_1_0_1"/>
<dbReference type="InParanoid" id="P82631"/>
<dbReference type="OMA" id="HHRCICY"/>
<dbReference type="OrthoDB" id="1021149at2759"/>
<dbReference type="PhylomeDB" id="P82631"/>
<dbReference type="PRO" id="PR:P82631"/>
<dbReference type="Proteomes" id="UP000006548">
    <property type="component" value="Chromosome 3"/>
</dbReference>
<dbReference type="ExpressionAtlas" id="P82631">
    <property type="expression patterns" value="baseline"/>
</dbReference>
<dbReference type="GO" id="GO:0005576">
    <property type="term" value="C:extracellular region"/>
    <property type="evidence" value="ECO:0007669"/>
    <property type="project" value="UniProtKB-SubCell"/>
</dbReference>
<dbReference type="GO" id="GO:0050832">
    <property type="term" value="P:defense response to fungus"/>
    <property type="evidence" value="ECO:0007669"/>
    <property type="project" value="UniProtKB-KW"/>
</dbReference>
<dbReference type="GO" id="GO:0031640">
    <property type="term" value="P:killing of cells of another organism"/>
    <property type="evidence" value="ECO:0007669"/>
    <property type="project" value="UniProtKB-KW"/>
</dbReference>
<dbReference type="GO" id="GO:0007165">
    <property type="term" value="P:signal transduction"/>
    <property type="evidence" value="ECO:0007669"/>
    <property type="project" value="InterPro"/>
</dbReference>
<dbReference type="InterPro" id="IPR010682">
    <property type="entry name" value="SCRL"/>
</dbReference>
<dbReference type="PANTHER" id="PTHR34450:SF6">
    <property type="entry name" value="DEFENSIN-LIKE PROTEIN 241-RELATED"/>
    <property type="match status" value="1"/>
</dbReference>
<dbReference type="PANTHER" id="PTHR34450">
    <property type="entry name" value="DEFENSIN-LIKE PROTEIN 245-RELATED"/>
    <property type="match status" value="1"/>
</dbReference>
<gene>
    <name type="primary">SCRL12</name>
    <name type="ordered locus">At3g23727</name>
    <name type="ORF">MYM9</name>
</gene>
<evidence type="ECO:0000250" key="1"/>
<evidence type="ECO:0000255" key="2"/>
<evidence type="ECO:0000305" key="3"/>
<protein>
    <recommendedName>
        <fullName>Putative defensin-like protein 251</fullName>
    </recommendedName>
    <alternativeName>
        <fullName>Putative S locus cysteine-rich-like protein 12</fullName>
        <shortName>Protein SCRL12</shortName>
        <shortName>SCR-like protein 12</shortName>
    </alternativeName>
</protein>